<reference key="1">
    <citation type="journal article" date="2005" name="PLoS Genet.">
        <title>Life in hot carbon monoxide: the complete genome sequence of Carboxydothermus hydrogenoformans Z-2901.</title>
        <authorList>
            <person name="Wu M."/>
            <person name="Ren Q."/>
            <person name="Durkin A.S."/>
            <person name="Daugherty S.C."/>
            <person name="Brinkac L.M."/>
            <person name="Dodson R.J."/>
            <person name="Madupu R."/>
            <person name="Sullivan S.A."/>
            <person name="Kolonay J.F."/>
            <person name="Nelson W.C."/>
            <person name="Tallon L.J."/>
            <person name="Jones K.M."/>
            <person name="Ulrich L.E."/>
            <person name="Gonzalez J.M."/>
            <person name="Zhulin I.B."/>
            <person name="Robb F.T."/>
            <person name="Eisen J.A."/>
        </authorList>
    </citation>
    <scope>NUCLEOTIDE SEQUENCE [LARGE SCALE GENOMIC DNA]</scope>
    <source>
        <strain>ATCC BAA-161 / DSM 6008 / Z-2901</strain>
    </source>
</reference>
<organism>
    <name type="scientific">Carboxydothermus hydrogenoformans (strain ATCC BAA-161 / DSM 6008 / Z-2901)</name>
    <dbReference type="NCBI Taxonomy" id="246194"/>
    <lineage>
        <taxon>Bacteria</taxon>
        <taxon>Bacillati</taxon>
        <taxon>Bacillota</taxon>
        <taxon>Clostridia</taxon>
        <taxon>Thermoanaerobacterales</taxon>
        <taxon>Thermoanaerobacteraceae</taxon>
        <taxon>Carboxydothermus</taxon>
    </lineage>
</organism>
<evidence type="ECO:0000255" key="1">
    <source>
        <dbReference type="HAMAP-Rule" id="MF_01345"/>
    </source>
</evidence>
<evidence type="ECO:0000305" key="2"/>
<protein>
    <recommendedName>
        <fullName evidence="1">Small ribosomal subunit protein uS17</fullName>
    </recommendedName>
    <alternativeName>
        <fullName evidence="2">30S ribosomal protein S17</fullName>
    </alternativeName>
</protein>
<feature type="chain" id="PRO_0000233452" description="Small ribosomal subunit protein uS17">
    <location>
        <begin position="1"/>
        <end position="98"/>
    </location>
</feature>
<gene>
    <name evidence="1" type="primary">rpsQ</name>
    <name type="ordered locus">CHY_2300</name>
</gene>
<sequence length="98" mass="11379">MEKKKVQKIKIGRVVSDKMDKTVVVAVEELVSHPLYKKTIRRTKKFKAHDEHNACRTGDIVKIAETRPLSKEKRWRVVEIIERGKVLGEEENLETIEG</sequence>
<keyword id="KW-1185">Reference proteome</keyword>
<keyword id="KW-0687">Ribonucleoprotein</keyword>
<keyword id="KW-0689">Ribosomal protein</keyword>
<keyword id="KW-0694">RNA-binding</keyword>
<keyword id="KW-0699">rRNA-binding</keyword>
<comment type="function">
    <text evidence="1">One of the primary rRNA binding proteins, it binds specifically to the 5'-end of 16S ribosomal RNA.</text>
</comment>
<comment type="subunit">
    <text evidence="1">Part of the 30S ribosomal subunit.</text>
</comment>
<comment type="similarity">
    <text evidence="1">Belongs to the universal ribosomal protein uS17 family.</text>
</comment>
<name>RS17_CARHZ</name>
<accession>Q3A9S5</accession>
<proteinExistence type="inferred from homology"/>
<dbReference type="EMBL" id="CP000141">
    <property type="protein sequence ID" value="ABB16133.1"/>
    <property type="molecule type" value="Genomic_DNA"/>
</dbReference>
<dbReference type="RefSeq" id="WP_011345182.1">
    <property type="nucleotide sequence ID" value="NC_007503.1"/>
</dbReference>
<dbReference type="SMR" id="Q3A9S5"/>
<dbReference type="FunCoup" id="Q3A9S5">
    <property type="interactions" value="388"/>
</dbReference>
<dbReference type="STRING" id="246194.CHY_2300"/>
<dbReference type="KEGG" id="chy:CHY_2300"/>
<dbReference type="eggNOG" id="COG0186">
    <property type="taxonomic scope" value="Bacteria"/>
</dbReference>
<dbReference type="HOGENOM" id="CLU_073626_1_0_9"/>
<dbReference type="InParanoid" id="Q3A9S5"/>
<dbReference type="OrthoDB" id="9811714at2"/>
<dbReference type="Proteomes" id="UP000002706">
    <property type="component" value="Chromosome"/>
</dbReference>
<dbReference type="GO" id="GO:0022627">
    <property type="term" value="C:cytosolic small ribosomal subunit"/>
    <property type="evidence" value="ECO:0007669"/>
    <property type="project" value="TreeGrafter"/>
</dbReference>
<dbReference type="GO" id="GO:0019843">
    <property type="term" value="F:rRNA binding"/>
    <property type="evidence" value="ECO:0007669"/>
    <property type="project" value="UniProtKB-UniRule"/>
</dbReference>
<dbReference type="GO" id="GO:0003735">
    <property type="term" value="F:structural constituent of ribosome"/>
    <property type="evidence" value="ECO:0007669"/>
    <property type="project" value="InterPro"/>
</dbReference>
<dbReference type="GO" id="GO:0006412">
    <property type="term" value="P:translation"/>
    <property type="evidence" value="ECO:0007669"/>
    <property type="project" value="UniProtKB-UniRule"/>
</dbReference>
<dbReference type="CDD" id="cd00364">
    <property type="entry name" value="Ribosomal_uS17"/>
    <property type="match status" value="1"/>
</dbReference>
<dbReference type="FunFam" id="2.40.50.140:FF:000123">
    <property type="entry name" value="30S ribosomal protein S17"/>
    <property type="match status" value="1"/>
</dbReference>
<dbReference type="Gene3D" id="2.40.50.140">
    <property type="entry name" value="Nucleic acid-binding proteins"/>
    <property type="match status" value="1"/>
</dbReference>
<dbReference type="HAMAP" id="MF_01345_B">
    <property type="entry name" value="Ribosomal_uS17_B"/>
    <property type="match status" value="1"/>
</dbReference>
<dbReference type="InterPro" id="IPR012340">
    <property type="entry name" value="NA-bd_OB-fold"/>
</dbReference>
<dbReference type="InterPro" id="IPR000266">
    <property type="entry name" value="Ribosomal_uS17"/>
</dbReference>
<dbReference type="InterPro" id="IPR019984">
    <property type="entry name" value="Ribosomal_uS17_bact/chlr"/>
</dbReference>
<dbReference type="InterPro" id="IPR019979">
    <property type="entry name" value="Ribosomal_uS17_CS"/>
</dbReference>
<dbReference type="NCBIfam" id="NF004123">
    <property type="entry name" value="PRK05610.1"/>
    <property type="match status" value="1"/>
</dbReference>
<dbReference type="NCBIfam" id="TIGR03635">
    <property type="entry name" value="uS17_bact"/>
    <property type="match status" value="1"/>
</dbReference>
<dbReference type="PANTHER" id="PTHR10744">
    <property type="entry name" value="40S RIBOSOMAL PROTEIN S11 FAMILY MEMBER"/>
    <property type="match status" value="1"/>
</dbReference>
<dbReference type="PANTHER" id="PTHR10744:SF1">
    <property type="entry name" value="SMALL RIBOSOMAL SUBUNIT PROTEIN US17M"/>
    <property type="match status" value="1"/>
</dbReference>
<dbReference type="Pfam" id="PF00366">
    <property type="entry name" value="Ribosomal_S17"/>
    <property type="match status" value="1"/>
</dbReference>
<dbReference type="PRINTS" id="PR00973">
    <property type="entry name" value="RIBOSOMALS17"/>
</dbReference>
<dbReference type="SUPFAM" id="SSF50249">
    <property type="entry name" value="Nucleic acid-binding proteins"/>
    <property type="match status" value="1"/>
</dbReference>
<dbReference type="PROSITE" id="PS00056">
    <property type="entry name" value="RIBOSOMAL_S17"/>
    <property type="match status" value="1"/>
</dbReference>